<dbReference type="EC" id="2.1.1.222" evidence="1"/>
<dbReference type="EC" id="2.1.1.64" evidence="1"/>
<dbReference type="EMBL" id="CP001657">
    <property type="protein sequence ID" value="ACT12152.1"/>
    <property type="molecule type" value="Genomic_DNA"/>
</dbReference>
<dbReference type="RefSeq" id="WP_015839392.1">
    <property type="nucleotide sequence ID" value="NC_012917.1"/>
</dbReference>
<dbReference type="SMR" id="C6DBN5"/>
<dbReference type="STRING" id="561230.PC1_1104"/>
<dbReference type="GeneID" id="67795123"/>
<dbReference type="KEGG" id="pct:PC1_1104"/>
<dbReference type="eggNOG" id="COG2227">
    <property type="taxonomic scope" value="Bacteria"/>
</dbReference>
<dbReference type="HOGENOM" id="CLU_042432_5_0_6"/>
<dbReference type="OrthoDB" id="9801538at2"/>
<dbReference type="UniPathway" id="UPA00232"/>
<dbReference type="Proteomes" id="UP000002736">
    <property type="component" value="Chromosome"/>
</dbReference>
<dbReference type="GO" id="GO:0102208">
    <property type="term" value="F:2-polyprenyl-6-hydroxyphenol methylase activity"/>
    <property type="evidence" value="ECO:0007669"/>
    <property type="project" value="UniProtKB-EC"/>
</dbReference>
<dbReference type="GO" id="GO:0061542">
    <property type="term" value="F:3-demethylubiquinol 3-O-methyltransferase activity"/>
    <property type="evidence" value="ECO:0007669"/>
    <property type="project" value="UniProtKB-UniRule"/>
</dbReference>
<dbReference type="GO" id="GO:0010420">
    <property type="term" value="F:polyprenyldihydroxybenzoate methyltransferase activity"/>
    <property type="evidence" value="ECO:0007669"/>
    <property type="project" value="InterPro"/>
</dbReference>
<dbReference type="GO" id="GO:0032259">
    <property type="term" value="P:methylation"/>
    <property type="evidence" value="ECO:0007669"/>
    <property type="project" value="UniProtKB-KW"/>
</dbReference>
<dbReference type="CDD" id="cd02440">
    <property type="entry name" value="AdoMet_MTases"/>
    <property type="match status" value="1"/>
</dbReference>
<dbReference type="FunFam" id="3.40.50.150:FF:000028">
    <property type="entry name" value="Ubiquinone biosynthesis O-methyltransferase"/>
    <property type="match status" value="1"/>
</dbReference>
<dbReference type="Gene3D" id="3.40.50.150">
    <property type="entry name" value="Vaccinia Virus protein VP39"/>
    <property type="match status" value="1"/>
</dbReference>
<dbReference type="HAMAP" id="MF_00472">
    <property type="entry name" value="UbiG"/>
    <property type="match status" value="1"/>
</dbReference>
<dbReference type="InterPro" id="IPR029063">
    <property type="entry name" value="SAM-dependent_MTases_sf"/>
</dbReference>
<dbReference type="InterPro" id="IPR010233">
    <property type="entry name" value="UbiG_MeTrfase"/>
</dbReference>
<dbReference type="NCBIfam" id="TIGR01983">
    <property type="entry name" value="UbiG"/>
    <property type="match status" value="1"/>
</dbReference>
<dbReference type="PANTHER" id="PTHR43464">
    <property type="entry name" value="METHYLTRANSFERASE"/>
    <property type="match status" value="1"/>
</dbReference>
<dbReference type="PANTHER" id="PTHR43464:SF19">
    <property type="entry name" value="UBIQUINONE BIOSYNTHESIS O-METHYLTRANSFERASE, MITOCHONDRIAL"/>
    <property type="match status" value="1"/>
</dbReference>
<dbReference type="Pfam" id="PF13489">
    <property type="entry name" value="Methyltransf_23"/>
    <property type="match status" value="1"/>
</dbReference>
<dbReference type="SUPFAM" id="SSF53335">
    <property type="entry name" value="S-adenosyl-L-methionine-dependent methyltransferases"/>
    <property type="match status" value="1"/>
</dbReference>
<sequence>MNVENQTPNVDHQEIAKFEAIASRWWDLEGEFKPLHRINPLRLGYISQRAEGLFGKKVLDVGCGGGILAESMAREGADVTGLDMGAEPLQVARLHALESGVAVNYVQETVEAHAQAHPGLYDVVTCMEMLEHVPDPQSVVQACAKLVKPGGHVFFSTINRNAKAWMMAVIGAEYVLKMVPRGTHDIKKFIRPAELMHWVDSTPLREKHITGLHYNPLTDHFKLGPNVDVNYMLHTRHDK</sequence>
<organism>
    <name type="scientific">Pectobacterium carotovorum subsp. carotovorum (strain PC1)</name>
    <dbReference type="NCBI Taxonomy" id="561230"/>
    <lineage>
        <taxon>Bacteria</taxon>
        <taxon>Pseudomonadati</taxon>
        <taxon>Pseudomonadota</taxon>
        <taxon>Gammaproteobacteria</taxon>
        <taxon>Enterobacterales</taxon>
        <taxon>Pectobacteriaceae</taxon>
        <taxon>Pectobacterium</taxon>
    </lineage>
</organism>
<comment type="function">
    <text evidence="1">O-methyltransferase that catalyzes the 2 O-methylation steps in the ubiquinone biosynthetic pathway.</text>
</comment>
<comment type="catalytic activity">
    <reaction evidence="1">
        <text>a 3-demethylubiquinol + S-adenosyl-L-methionine = a ubiquinol + S-adenosyl-L-homocysteine + H(+)</text>
        <dbReference type="Rhea" id="RHEA:44380"/>
        <dbReference type="Rhea" id="RHEA-COMP:9566"/>
        <dbReference type="Rhea" id="RHEA-COMP:10914"/>
        <dbReference type="ChEBI" id="CHEBI:15378"/>
        <dbReference type="ChEBI" id="CHEBI:17976"/>
        <dbReference type="ChEBI" id="CHEBI:57856"/>
        <dbReference type="ChEBI" id="CHEBI:59789"/>
        <dbReference type="ChEBI" id="CHEBI:84422"/>
        <dbReference type="EC" id="2.1.1.64"/>
    </reaction>
</comment>
<comment type="catalytic activity">
    <reaction evidence="1">
        <text>a 3-(all-trans-polyprenyl)benzene-1,2-diol + S-adenosyl-L-methionine = a 2-methoxy-6-(all-trans-polyprenyl)phenol + S-adenosyl-L-homocysteine + H(+)</text>
        <dbReference type="Rhea" id="RHEA:31411"/>
        <dbReference type="Rhea" id="RHEA-COMP:9550"/>
        <dbReference type="Rhea" id="RHEA-COMP:9551"/>
        <dbReference type="ChEBI" id="CHEBI:15378"/>
        <dbReference type="ChEBI" id="CHEBI:57856"/>
        <dbReference type="ChEBI" id="CHEBI:59789"/>
        <dbReference type="ChEBI" id="CHEBI:62729"/>
        <dbReference type="ChEBI" id="CHEBI:62731"/>
        <dbReference type="EC" id="2.1.1.222"/>
    </reaction>
</comment>
<comment type="pathway">
    <text evidence="1">Cofactor biosynthesis; ubiquinone biosynthesis.</text>
</comment>
<comment type="similarity">
    <text evidence="1">Belongs to the methyltransferase superfamily. UbiG/COQ3 family.</text>
</comment>
<accession>C6DBN5</accession>
<evidence type="ECO:0000255" key="1">
    <source>
        <dbReference type="HAMAP-Rule" id="MF_00472"/>
    </source>
</evidence>
<feature type="chain" id="PRO_1000206357" description="Ubiquinone biosynthesis O-methyltransferase">
    <location>
        <begin position="1"/>
        <end position="239"/>
    </location>
</feature>
<feature type="binding site" evidence="1">
    <location>
        <position position="42"/>
    </location>
    <ligand>
        <name>S-adenosyl-L-methionine</name>
        <dbReference type="ChEBI" id="CHEBI:59789"/>
    </ligand>
</feature>
<feature type="binding site" evidence="1">
    <location>
        <position position="62"/>
    </location>
    <ligand>
        <name>S-adenosyl-L-methionine</name>
        <dbReference type="ChEBI" id="CHEBI:59789"/>
    </ligand>
</feature>
<feature type="binding site" evidence="1">
    <location>
        <position position="83"/>
    </location>
    <ligand>
        <name>S-adenosyl-L-methionine</name>
        <dbReference type="ChEBI" id="CHEBI:59789"/>
    </ligand>
</feature>
<feature type="binding site" evidence="1">
    <location>
        <position position="127"/>
    </location>
    <ligand>
        <name>S-adenosyl-L-methionine</name>
        <dbReference type="ChEBI" id="CHEBI:59789"/>
    </ligand>
</feature>
<reference key="1">
    <citation type="submission" date="2009-07" db="EMBL/GenBank/DDBJ databases">
        <title>Complete sequence of Pectobacterium carotovorum subsp. carotovorum PC1.</title>
        <authorList>
            <consortium name="US DOE Joint Genome Institute"/>
            <person name="Lucas S."/>
            <person name="Copeland A."/>
            <person name="Lapidus A."/>
            <person name="Glavina del Rio T."/>
            <person name="Tice H."/>
            <person name="Bruce D."/>
            <person name="Goodwin L."/>
            <person name="Pitluck S."/>
            <person name="Munk A.C."/>
            <person name="Brettin T."/>
            <person name="Detter J.C."/>
            <person name="Han C."/>
            <person name="Tapia R."/>
            <person name="Larimer F."/>
            <person name="Land M."/>
            <person name="Hauser L."/>
            <person name="Kyrpides N."/>
            <person name="Mikhailova N."/>
            <person name="Balakrishnan V."/>
            <person name="Glasner J."/>
            <person name="Perna N.T."/>
        </authorList>
    </citation>
    <scope>NUCLEOTIDE SEQUENCE [LARGE SCALE GENOMIC DNA]</scope>
    <source>
        <strain>PC1</strain>
    </source>
</reference>
<name>UBIG_PECCP</name>
<gene>
    <name evidence="1" type="primary">ubiG</name>
    <name type="ordered locus">PC1_1104</name>
</gene>
<keyword id="KW-0489">Methyltransferase</keyword>
<keyword id="KW-0949">S-adenosyl-L-methionine</keyword>
<keyword id="KW-0808">Transferase</keyword>
<keyword id="KW-0831">Ubiquinone biosynthesis</keyword>
<protein>
    <recommendedName>
        <fullName evidence="1">Ubiquinone biosynthesis O-methyltransferase</fullName>
    </recommendedName>
    <alternativeName>
        <fullName evidence="1">2-polyprenyl-6-hydroxyphenol methylase</fullName>
        <ecNumber evidence="1">2.1.1.222</ecNumber>
    </alternativeName>
    <alternativeName>
        <fullName evidence="1">3-demethylubiquinone 3-O-methyltransferase</fullName>
        <ecNumber evidence="1">2.1.1.64</ecNumber>
    </alternativeName>
</protein>
<proteinExistence type="inferred from homology"/>